<feature type="chain" id="PRO_0000220880" description="Prenylated Rab acceptor protein 1">
    <location>
        <begin position="1"/>
        <end position="185"/>
    </location>
</feature>
<feature type="topological domain" description="Cytoplasmic" evidence="1">
    <location>
        <begin position="1"/>
        <end position="78"/>
    </location>
</feature>
<feature type="transmembrane region" description="Helical" evidence="1">
    <location>
        <begin position="79"/>
        <end position="94"/>
    </location>
</feature>
<feature type="transmembrane region" description="Helical" evidence="1">
    <location>
        <begin position="95"/>
        <end position="112"/>
    </location>
</feature>
<feature type="topological domain" description="Cytoplasmic" evidence="1">
    <location>
        <begin position="113"/>
        <end position="131"/>
    </location>
</feature>
<feature type="transmembrane region" description="Helical" evidence="1">
    <location>
        <begin position="132"/>
        <end position="148"/>
    </location>
</feature>
<feature type="transmembrane region" description="Helical" evidence="1">
    <location>
        <begin position="149"/>
        <end position="165"/>
    </location>
</feature>
<feature type="topological domain" description="Cytoplasmic" evidence="1">
    <location>
        <begin position="166"/>
        <end position="185"/>
    </location>
</feature>
<feature type="region of interest" description="Required for interaction with prenylated RAB3A and VAMP2">
    <location>
        <begin position="30"/>
        <end position="54"/>
    </location>
</feature>
<feature type="region of interest" description="Required for interaction with GDI1" evidence="4">
    <location>
        <begin position="165"/>
        <end position="185"/>
    </location>
</feature>
<feature type="region of interest" description="Homodimerization" evidence="1">
    <location>
        <begin position="175"/>
        <end position="185"/>
    </location>
</feature>
<feature type="region of interest" description="Required for interaction with prenylated RAB3A and VAMP2">
    <location>
        <begin position="175"/>
        <end position="185"/>
    </location>
</feature>
<feature type="mutagenesis site" description="Retained in endoplasmic reticulum, no interaction with RAB3A or VAMP2." evidence="6">
    <original>N</original>
    <variation>T</variation>
    <location>
        <position position="70"/>
    </location>
</feature>
<feature type="mutagenesis site" description="Retained in endoplasmic reticulum, Golgi and tubular structures, no interaction with RAB3A." evidence="6">
    <original>Y</original>
    <variation>A</variation>
    <location>
        <position position="73"/>
    </location>
</feature>
<feature type="mutagenesis site" description="Increased interaction with RAB3A or VAMP2, Golgi condensation." evidence="6">
    <original>S</original>
    <variation>A</variation>
    <variation>V</variation>
    <location>
        <position position="76"/>
    </location>
</feature>
<feature type="mutagenesis site" description="No effect." evidence="6">
    <original>N</original>
    <variation>A</variation>
    <location>
        <position position="77"/>
    </location>
</feature>
<feature type="mutagenesis site" description="Retained in endoplasmic reticulum, no interaction with RAB3A or VAMP2." evidence="6">
    <original>Y</original>
    <variation>A</variation>
    <location>
        <position position="78"/>
    </location>
</feature>
<feature type="mutagenesis site" description="No effect." evidence="6">
    <original>W</original>
    <variation>A</variation>
    <location>
        <position position="154"/>
    </location>
</feature>
<feature type="mutagenesis site" description="Increased interaction with RAB3A or VAMP2, Golgi condensation." evidence="6">
    <original>V</original>
    <variation>A</variation>
    <location>
        <position position="161"/>
    </location>
</feature>
<feature type="mutagenesis site" description="Retained in endoplasmic reticulum, Golgi and tubular structures, no interaction with RAB3A." evidence="6">
    <original>H</original>
    <variation>A</variation>
    <location>
        <position position="166"/>
    </location>
</feature>
<feature type="mutagenesis site" description="Retained in endoplasmic reticulum." evidence="5">
    <original>D</original>
    <variation>A</variation>
    <location>
        <position position="176"/>
    </location>
</feature>
<feature type="mutagenesis site" description="Retained in endoplasmic reticulum." evidence="5">
    <original>E</original>
    <variation>A</variation>
    <location>
        <position position="178"/>
    </location>
</feature>
<feature type="mutagenesis site" description="Retained in endoplasmic reticulum." evidence="5">
    <original>E</original>
    <variation>A</variation>
    <location>
        <position position="179"/>
    </location>
</feature>
<name>PRAF1_RAT</name>
<evidence type="ECO:0000250" key="1"/>
<evidence type="ECO:0000255" key="2"/>
<evidence type="ECO:0000269" key="3">
    <source>
    </source>
</evidence>
<evidence type="ECO:0000269" key="4">
    <source>
    </source>
</evidence>
<evidence type="ECO:0000269" key="5">
    <source>
    </source>
</evidence>
<evidence type="ECO:0000269" key="6">
    <source>
    </source>
</evidence>
<evidence type="ECO:0000269" key="7">
    <source>
    </source>
</evidence>
<evidence type="ECO:0000305" key="8"/>
<proteinExistence type="evidence at protein level"/>
<comment type="function">
    <text evidence="4 6 7">General Rab protein regulator required for vesicle formation from the Golgi complex. May control vesicle docking and fusion by mediating the action of Rab GTPases to the SNARE complexes. In addition it inhibits the removal of Rab GTPases from the membrane by GDI1.</text>
</comment>
<comment type="subunit">
    <text evidence="1 3 4">Homodimers (By similarity). Interacts specifically with both prenylated Rab proteins (including RAB3A and RAB1), and VAMP2 (synaptobrevin-2), in an exclusive way. Interacts with NDRG1 (By similarity). Interacts with free GDI1 in the absence of Rab proteins. Also interacts with PCLO.</text>
</comment>
<comment type="subcellular location">
    <subcellularLocation>
        <location evidence="4">Cell membrane</location>
        <topology evidence="2">Multi-pass membrane protein</topology>
    </subcellularLocation>
    <subcellularLocation>
        <location evidence="4">Cytoplasm</location>
    </subcellularLocation>
    <subcellularLocation>
        <location evidence="4 5 6">Golgi apparatus</location>
    </subcellularLocation>
    <subcellularLocation>
        <location evidence="3">Cytoplasmic vesicle</location>
        <location evidence="3">Secretory vesicle</location>
        <location evidence="3">Synaptic vesicle</location>
    </subcellularLocation>
    <text evidence="3 4 5 6">According to some authors, it is an integral membrane protein, while others showed that it is cytoplasmic and membrane-associated to Golgi (PubMed:10751420, PubMed:12107180, PubMed:11096102) and synaptic vesicles (PubMed:10707984).</text>
</comment>
<comment type="tissue specificity">
    <text evidence="7">Ubiquitous.</text>
</comment>
<comment type="similarity">
    <text evidence="8">Belongs to the PRA1 family.</text>
</comment>
<comment type="caution">
    <text evidence="8">In contrast to the mouse ortholog, it does not interact with the Ras-like GTPases RAC1 and RHOA.</text>
</comment>
<keyword id="KW-1003">Cell membrane</keyword>
<keyword id="KW-0963">Cytoplasm</keyword>
<keyword id="KW-0968">Cytoplasmic vesicle</keyword>
<keyword id="KW-0333">Golgi apparatus</keyword>
<keyword id="KW-0472">Membrane</keyword>
<keyword id="KW-1185">Reference proteome</keyword>
<keyword id="KW-0770">Synapse</keyword>
<keyword id="KW-0812">Transmembrane</keyword>
<keyword id="KW-1133">Transmembrane helix</keyword>
<protein>
    <recommendedName>
        <fullName>Prenylated Rab acceptor protein 1</fullName>
    </recommendedName>
    <alternativeName>
        <fullName>PRA1 family protein 1</fullName>
    </alternativeName>
</protein>
<accession>O35394</accession>
<sequence>MAAQKDQQKDAEVEGLSATTLLPKLIPSGAGREWLERRRATIRPWGTFVDQQRFSRPRNVGELCQRLVRNVEYYQSNYVFVFLGLILYCVVTSPMLLVALAVFFGACYILYLRTLQSKLVLFGREVSPAHQYALAGGVSFPFFWLAGAGSAVFWVLGATLVLIGSHAAFHQIEPADGEELQMEPV</sequence>
<organism>
    <name type="scientific">Rattus norvegicus</name>
    <name type="common">Rat</name>
    <dbReference type="NCBI Taxonomy" id="10116"/>
    <lineage>
        <taxon>Eukaryota</taxon>
        <taxon>Metazoa</taxon>
        <taxon>Chordata</taxon>
        <taxon>Craniata</taxon>
        <taxon>Vertebrata</taxon>
        <taxon>Euteleostomi</taxon>
        <taxon>Mammalia</taxon>
        <taxon>Eutheria</taxon>
        <taxon>Euarchontoglires</taxon>
        <taxon>Glires</taxon>
        <taxon>Rodentia</taxon>
        <taxon>Myomorpha</taxon>
        <taxon>Muroidea</taxon>
        <taxon>Muridae</taxon>
        <taxon>Murinae</taxon>
        <taxon>Rattus</taxon>
    </lineage>
</organism>
<reference key="1">
    <citation type="journal article" date="1997" name="J. Biol. Chem.">
        <title>Isolation and characterization of a dual prenylated Rab and VAMP2 receptor.</title>
        <authorList>
            <person name="Martincic I."/>
            <person name="Peralta M.E."/>
            <person name="Ngsee J.K."/>
        </authorList>
    </citation>
    <scope>NUCLEOTIDE SEQUENCE [MRNA]</scope>
    <scope>FUNCTION</scope>
    <scope>TISSUE SPECIFICITY</scope>
    <source>
        <tissue>Brain</tissue>
    </source>
</reference>
<reference key="2">
    <citation type="journal article" date="2004" name="Genome Res.">
        <title>The status, quality, and expansion of the NIH full-length cDNA project: the Mammalian Gene Collection (MGC).</title>
        <authorList>
            <consortium name="The MGC Project Team"/>
        </authorList>
    </citation>
    <scope>NUCLEOTIDE SEQUENCE [LARGE SCALE MRNA]</scope>
    <source>
        <tissue>Ovary</tissue>
    </source>
</reference>
<reference key="3">
    <citation type="journal article" date="2000" name="J. Biol. Chem.">
        <title>PRA1 inhibits the extraction of membrane-bound rab GTPase by GDI1.</title>
        <authorList>
            <person name="Hutt D.M."/>
            <person name="da Silva L.F."/>
            <person name="Chang L.-H."/>
            <person name="Prosser D.C."/>
            <person name="Ngsee J.K."/>
        </authorList>
    </citation>
    <scope>FUNCTION</scope>
    <scope>SUBCELLULAR LOCATION</scope>
    <scope>INTERACTION WITH GDI1</scope>
</reference>
<reference key="4">
    <citation type="journal article" date="2002" name="J. Biol. Chem.">
        <title>Disruption of Golgi morphology and trafficking in cells expressing mutant prenylated rab acceptor-1.</title>
        <authorList>
            <person name="Gougeon P.-Y."/>
            <person name="Prosser D.C."/>
            <person name="Da-Silva L.F."/>
            <person name="Ngsee J.K."/>
        </authorList>
    </citation>
    <scope>MUTAGENESIS OF ASN-70; TYR-73; SER-76; ASN-77; TYR-78; TRP-154; VAL-161 AND HIS-166</scope>
    <scope>FUNCTION</scope>
    <scope>SUBCELLULAR LOCATION</scope>
</reference>
<reference key="5">
    <citation type="journal article" date="2001" name="J. Biol. Chem.">
        <title>PRA isoforms are targeted to distinct membrane compartments.</title>
        <authorList>
            <person name="Abdul-Ghani M."/>
            <person name="Gougeon P.-Y."/>
            <person name="Prosser D.C."/>
            <person name="Da-Silva L.F."/>
            <person name="Ngsee J.K."/>
        </authorList>
    </citation>
    <scope>MUTAGENESIS OF ASP-176; GLU-178 AND GLU-179</scope>
    <scope>SUBCELLULAR LOCATION</scope>
</reference>
<reference key="6">
    <citation type="journal article" date="2000" name="Neuron">
        <title>Piccolo, a presynaptic zinc finger protein structurally related to bassoon.</title>
        <authorList>
            <person name="Fenster S.D."/>
            <person name="Chung W.J."/>
            <person name="Zhai R."/>
            <person name="Cases-Langhoff C."/>
            <person name="Voss B."/>
            <person name="Garner A.M."/>
            <person name="Kaempf U."/>
            <person name="Kindler S."/>
            <person name="Gundelfinger E.D."/>
            <person name="Garner C.C."/>
        </authorList>
    </citation>
    <scope>INTERACTION WITH PCLO</scope>
    <scope>SUBCELLULAR LOCATION</scope>
</reference>
<gene>
    <name type="primary">Rabac1</name>
    <name type="synonym">Pra1</name>
    <name type="synonym">Praf1</name>
</gene>
<dbReference type="EMBL" id="AF025506">
    <property type="protein sequence ID" value="AAB81721.1"/>
    <property type="molecule type" value="mRNA"/>
</dbReference>
<dbReference type="EMBL" id="BC086387">
    <property type="protein sequence ID" value="AAH86387.1"/>
    <property type="molecule type" value="mRNA"/>
</dbReference>
<dbReference type="RefSeq" id="NP_113962.1">
    <property type="nucleotide sequence ID" value="NM_031774.2"/>
</dbReference>
<dbReference type="FunCoup" id="O35394">
    <property type="interactions" value="899"/>
</dbReference>
<dbReference type="IntAct" id="O35394">
    <property type="interactions" value="2"/>
</dbReference>
<dbReference type="STRING" id="10116.ENSRNOP00000027435"/>
<dbReference type="PhosphoSitePlus" id="O35394"/>
<dbReference type="PaxDb" id="10116-ENSRNOP00000027435"/>
<dbReference type="Ensembl" id="ENSRNOT00000027435.5">
    <property type="protein sequence ID" value="ENSRNOP00000027435.1"/>
    <property type="gene ID" value="ENSRNOG00000020233.5"/>
</dbReference>
<dbReference type="GeneID" id="83583"/>
<dbReference type="KEGG" id="rno:83583"/>
<dbReference type="UCSC" id="RGD:621002">
    <property type="organism name" value="rat"/>
</dbReference>
<dbReference type="AGR" id="RGD:621002"/>
<dbReference type="CTD" id="10567"/>
<dbReference type="RGD" id="621002">
    <property type="gene designation" value="Rabac1"/>
</dbReference>
<dbReference type="eggNOG" id="KOG3142">
    <property type="taxonomic scope" value="Eukaryota"/>
</dbReference>
<dbReference type="GeneTree" id="ENSGT00390000010549"/>
<dbReference type="HOGENOM" id="CLU_103851_0_2_1"/>
<dbReference type="InParanoid" id="O35394"/>
<dbReference type="OMA" id="FHQIEPA"/>
<dbReference type="OrthoDB" id="63113at2759"/>
<dbReference type="PhylomeDB" id="O35394"/>
<dbReference type="TreeFam" id="TF324857"/>
<dbReference type="PRO" id="PR:O35394"/>
<dbReference type="Proteomes" id="UP000002494">
    <property type="component" value="Chromosome 1"/>
</dbReference>
<dbReference type="Bgee" id="ENSRNOG00000020233">
    <property type="expression patterns" value="Expressed in pancreas and 20 other cell types or tissues"/>
</dbReference>
<dbReference type="GO" id="GO:0098978">
    <property type="term" value="C:glutamatergic synapse"/>
    <property type="evidence" value="ECO:0000314"/>
    <property type="project" value="SynGO"/>
</dbReference>
<dbReference type="GO" id="GO:0005794">
    <property type="term" value="C:Golgi apparatus"/>
    <property type="evidence" value="ECO:0000266"/>
    <property type="project" value="RGD"/>
</dbReference>
<dbReference type="GO" id="GO:0016020">
    <property type="term" value="C:membrane"/>
    <property type="evidence" value="ECO:0000266"/>
    <property type="project" value="RGD"/>
</dbReference>
<dbReference type="GO" id="GO:0005886">
    <property type="term" value="C:plasma membrane"/>
    <property type="evidence" value="ECO:0007669"/>
    <property type="project" value="UniProtKB-SubCell"/>
</dbReference>
<dbReference type="GO" id="GO:0098793">
    <property type="term" value="C:presynapse"/>
    <property type="evidence" value="ECO:0000314"/>
    <property type="project" value="SynGO"/>
</dbReference>
<dbReference type="GO" id="GO:0045202">
    <property type="term" value="C:synapse"/>
    <property type="evidence" value="ECO:0000314"/>
    <property type="project" value="SynGO"/>
</dbReference>
<dbReference type="GO" id="GO:0008021">
    <property type="term" value="C:synaptic vesicle"/>
    <property type="evidence" value="ECO:0007669"/>
    <property type="project" value="UniProtKB-SubCell"/>
</dbReference>
<dbReference type="GO" id="GO:0051020">
    <property type="term" value="F:GTPase binding"/>
    <property type="evidence" value="ECO:0000353"/>
    <property type="project" value="RGD"/>
</dbReference>
<dbReference type="GO" id="GO:0042802">
    <property type="term" value="F:identical protein binding"/>
    <property type="evidence" value="ECO:0000266"/>
    <property type="project" value="RGD"/>
</dbReference>
<dbReference type="GO" id="GO:0070064">
    <property type="term" value="F:proline-rich region binding"/>
    <property type="evidence" value="ECO:0000353"/>
    <property type="project" value="RGD"/>
</dbReference>
<dbReference type="GO" id="GO:0030674">
    <property type="term" value="F:protein-macromolecule adaptor activity"/>
    <property type="evidence" value="ECO:0000303"/>
    <property type="project" value="RGD"/>
</dbReference>
<dbReference type="GO" id="GO:0016192">
    <property type="term" value="P:vesicle-mediated transport"/>
    <property type="evidence" value="ECO:0000303"/>
    <property type="project" value="RGD"/>
</dbReference>
<dbReference type="InterPro" id="IPR004895">
    <property type="entry name" value="Prenylated_rab_accept_PRA1"/>
</dbReference>
<dbReference type="PANTHER" id="PTHR19317">
    <property type="entry name" value="PRENYLATED RAB ACCEPTOR 1-RELATED"/>
    <property type="match status" value="1"/>
</dbReference>
<dbReference type="PANTHER" id="PTHR19317:SF0">
    <property type="entry name" value="PRENYLATED RAB ACCEPTOR PROTEIN 1"/>
    <property type="match status" value="1"/>
</dbReference>
<dbReference type="Pfam" id="PF03208">
    <property type="entry name" value="PRA1"/>
    <property type="match status" value="1"/>
</dbReference>